<dbReference type="EC" id="1.5.1.5" evidence="1"/>
<dbReference type="EC" id="3.5.4.9" evidence="1"/>
<dbReference type="EMBL" id="CP001132">
    <property type="protein sequence ID" value="ACH83774.1"/>
    <property type="molecule type" value="Genomic_DNA"/>
</dbReference>
<dbReference type="RefSeq" id="WP_012536816.1">
    <property type="nucleotide sequence ID" value="NC_011206.1"/>
</dbReference>
<dbReference type="SMR" id="B5EJA0"/>
<dbReference type="GeneID" id="65281033"/>
<dbReference type="KEGG" id="afe:Lferr_1552"/>
<dbReference type="eggNOG" id="COG0190">
    <property type="taxonomic scope" value="Bacteria"/>
</dbReference>
<dbReference type="HOGENOM" id="CLU_034045_2_1_6"/>
<dbReference type="UniPathway" id="UPA00193"/>
<dbReference type="GO" id="GO:0005829">
    <property type="term" value="C:cytosol"/>
    <property type="evidence" value="ECO:0007669"/>
    <property type="project" value="TreeGrafter"/>
</dbReference>
<dbReference type="GO" id="GO:0004477">
    <property type="term" value="F:methenyltetrahydrofolate cyclohydrolase activity"/>
    <property type="evidence" value="ECO:0007669"/>
    <property type="project" value="UniProtKB-UniRule"/>
</dbReference>
<dbReference type="GO" id="GO:0004488">
    <property type="term" value="F:methylenetetrahydrofolate dehydrogenase (NADP+) activity"/>
    <property type="evidence" value="ECO:0007669"/>
    <property type="project" value="UniProtKB-UniRule"/>
</dbReference>
<dbReference type="GO" id="GO:0000105">
    <property type="term" value="P:L-histidine biosynthetic process"/>
    <property type="evidence" value="ECO:0007669"/>
    <property type="project" value="UniProtKB-KW"/>
</dbReference>
<dbReference type="GO" id="GO:0009086">
    <property type="term" value="P:methionine biosynthetic process"/>
    <property type="evidence" value="ECO:0007669"/>
    <property type="project" value="UniProtKB-KW"/>
</dbReference>
<dbReference type="GO" id="GO:0006164">
    <property type="term" value="P:purine nucleotide biosynthetic process"/>
    <property type="evidence" value="ECO:0007669"/>
    <property type="project" value="UniProtKB-KW"/>
</dbReference>
<dbReference type="GO" id="GO:0035999">
    <property type="term" value="P:tetrahydrofolate interconversion"/>
    <property type="evidence" value="ECO:0007669"/>
    <property type="project" value="UniProtKB-UniRule"/>
</dbReference>
<dbReference type="CDD" id="cd01080">
    <property type="entry name" value="NAD_bind_m-THF_DH_Cyclohyd"/>
    <property type="match status" value="1"/>
</dbReference>
<dbReference type="FunFam" id="3.40.50.720:FF:000006">
    <property type="entry name" value="Bifunctional protein FolD"/>
    <property type="match status" value="1"/>
</dbReference>
<dbReference type="FunFam" id="3.40.50.10860:FF:000005">
    <property type="entry name" value="C-1-tetrahydrofolate synthase, cytoplasmic, putative"/>
    <property type="match status" value="1"/>
</dbReference>
<dbReference type="Gene3D" id="3.40.50.10860">
    <property type="entry name" value="Leucine Dehydrogenase, chain A, domain 1"/>
    <property type="match status" value="1"/>
</dbReference>
<dbReference type="Gene3D" id="3.40.50.720">
    <property type="entry name" value="NAD(P)-binding Rossmann-like Domain"/>
    <property type="match status" value="1"/>
</dbReference>
<dbReference type="HAMAP" id="MF_01576">
    <property type="entry name" value="THF_DHG_CYH"/>
    <property type="match status" value="1"/>
</dbReference>
<dbReference type="InterPro" id="IPR046346">
    <property type="entry name" value="Aminoacid_DH-like_N_sf"/>
</dbReference>
<dbReference type="InterPro" id="IPR036291">
    <property type="entry name" value="NAD(P)-bd_dom_sf"/>
</dbReference>
<dbReference type="InterPro" id="IPR000672">
    <property type="entry name" value="THF_DH/CycHdrlase"/>
</dbReference>
<dbReference type="InterPro" id="IPR020630">
    <property type="entry name" value="THF_DH/CycHdrlase_cat_dom"/>
</dbReference>
<dbReference type="InterPro" id="IPR020867">
    <property type="entry name" value="THF_DH/CycHdrlase_CS"/>
</dbReference>
<dbReference type="InterPro" id="IPR020631">
    <property type="entry name" value="THF_DH/CycHdrlase_NAD-bd_dom"/>
</dbReference>
<dbReference type="NCBIfam" id="NF008058">
    <property type="entry name" value="PRK10792.1"/>
    <property type="match status" value="1"/>
</dbReference>
<dbReference type="NCBIfam" id="NF010783">
    <property type="entry name" value="PRK14186.1"/>
    <property type="match status" value="1"/>
</dbReference>
<dbReference type="PANTHER" id="PTHR48099:SF5">
    <property type="entry name" value="C-1-TETRAHYDROFOLATE SYNTHASE, CYTOPLASMIC"/>
    <property type="match status" value="1"/>
</dbReference>
<dbReference type="PANTHER" id="PTHR48099">
    <property type="entry name" value="C-1-TETRAHYDROFOLATE SYNTHASE, CYTOPLASMIC-RELATED"/>
    <property type="match status" value="1"/>
</dbReference>
<dbReference type="Pfam" id="PF00763">
    <property type="entry name" value="THF_DHG_CYH"/>
    <property type="match status" value="1"/>
</dbReference>
<dbReference type="Pfam" id="PF02882">
    <property type="entry name" value="THF_DHG_CYH_C"/>
    <property type="match status" value="1"/>
</dbReference>
<dbReference type="PRINTS" id="PR00085">
    <property type="entry name" value="THFDHDRGNASE"/>
</dbReference>
<dbReference type="SUPFAM" id="SSF53223">
    <property type="entry name" value="Aminoacid dehydrogenase-like, N-terminal domain"/>
    <property type="match status" value="1"/>
</dbReference>
<dbReference type="SUPFAM" id="SSF51735">
    <property type="entry name" value="NAD(P)-binding Rossmann-fold domains"/>
    <property type="match status" value="1"/>
</dbReference>
<dbReference type="PROSITE" id="PS00767">
    <property type="entry name" value="THF_DHG_CYH_2"/>
    <property type="match status" value="1"/>
</dbReference>
<accession>B5EJA0</accession>
<evidence type="ECO:0000255" key="1">
    <source>
        <dbReference type="HAMAP-Rule" id="MF_01576"/>
    </source>
</evidence>
<keyword id="KW-0028">Amino-acid biosynthesis</keyword>
<keyword id="KW-0368">Histidine biosynthesis</keyword>
<keyword id="KW-0378">Hydrolase</keyword>
<keyword id="KW-0486">Methionine biosynthesis</keyword>
<keyword id="KW-0511">Multifunctional enzyme</keyword>
<keyword id="KW-0521">NADP</keyword>
<keyword id="KW-0554">One-carbon metabolism</keyword>
<keyword id="KW-0560">Oxidoreductase</keyword>
<keyword id="KW-0658">Purine biosynthesis</keyword>
<name>FOLD_ACIF5</name>
<organism>
    <name type="scientific">Acidithiobacillus ferrooxidans (strain ATCC 53993 / BNL-5-31)</name>
    <name type="common">Leptospirillum ferrooxidans (ATCC 53993)</name>
    <dbReference type="NCBI Taxonomy" id="380394"/>
    <lineage>
        <taxon>Bacteria</taxon>
        <taxon>Pseudomonadati</taxon>
        <taxon>Pseudomonadota</taxon>
        <taxon>Acidithiobacillia</taxon>
        <taxon>Acidithiobacillales</taxon>
        <taxon>Acidithiobacillaceae</taxon>
        <taxon>Acidithiobacillus</taxon>
    </lineage>
</organism>
<proteinExistence type="inferred from homology"/>
<sequence>MTARRIDGKAIAQKIHADISLRSHAFLRQWGRSPGLAVVLVGADPASRIYVQKKRETCASVGIASFSANLPADTNPQQLLAHIGELNVNDAVDGILVQLPLPPHFDPEEIIEAIAVEKDVDGFHPYNIGRLALRAPLLRSCTPAGIMTLLQESGIDIKGKEAVIVGASNIVGRPMALELLLAGATVTVCHRFTRDLAAHVGRAELLVAAAGKPGLISGAWIREGAVVIDVGINRLPDGRVTGDVDFAGAEQRAAWITPVPGGVGPMTVATLLQNTLIAAEHRMGAPHV</sequence>
<gene>
    <name evidence="1" type="primary">folD</name>
    <name type="ordered locus">Lferr_1552</name>
</gene>
<feature type="chain" id="PRO_1000196744" description="Bifunctional protein FolD">
    <location>
        <begin position="1"/>
        <end position="288"/>
    </location>
</feature>
<feature type="binding site" evidence="1">
    <location>
        <begin position="166"/>
        <end position="168"/>
    </location>
    <ligand>
        <name>NADP(+)</name>
        <dbReference type="ChEBI" id="CHEBI:58349"/>
    </ligand>
</feature>
<feature type="binding site" evidence="1">
    <location>
        <position position="232"/>
    </location>
    <ligand>
        <name>NADP(+)</name>
        <dbReference type="ChEBI" id="CHEBI:58349"/>
    </ligand>
</feature>
<reference key="1">
    <citation type="submission" date="2008-08" db="EMBL/GenBank/DDBJ databases">
        <title>Complete sequence of Acidithiobacillus ferrooxidans ATCC 53993.</title>
        <authorList>
            <person name="Lucas S."/>
            <person name="Copeland A."/>
            <person name="Lapidus A."/>
            <person name="Glavina del Rio T."/>
            <person name="Dalin E."/>
            <person name="Tice H."/>
            <person name="Bruce D."/>
            <person name="Goodwin L."/>
            <person name="Pitluck S."/>
            <person name="Sims D."/>
            <person name="Brettin T."/>
            <person name="Detter J.C."/>
            <person name="Han C."/>
            <person name="Kuske C.R."/>
            <person name="Larimer F."/>
            <person name="Land M."/>
            <person name="Hauser L."/>
            <person name="Kyrpides N."/>
            <person name="Lykidis A."/>
            <person name="Borole A.P."/>
        </authorList>
    </citation>
    <scope>NUCLEOTIDE SEQUENCE [LARGE SCALE GENOMIC DNA]</scope>
    <source>
        <strain>ATCC 53993 / BNL-5-31</strain>
    </source>
</reference>
<protein>
    <recommendedName>
        <fullName evidence="1">Bifunctional protein FolD</fullName>
    </recommendedName>
    <domain>
        <recommendedName>
            <fullName evidence="1">Methylenetetrahydrofolate dehydrogenase</fullName>
            <ecNumber evidence="1">1.5.1.5</ecNumber>
        </recommendedName>
    </domain>
    <domain>
        <recommendedName>
            <fullName evidence="1">Methenyltetrahydrofolate cyclohydrolase</fullName>
            <ecNumber evidence="1">3.5.4.9</ecNumber>
        </recommendedName>
    </domain>
</protein>
<comment type="function">
    <text evidence="1">Catalyzes the oxidation of 5,10-methylenetetrahydrofolate to 5,10-methenyltetrahydrofolate and then the hydrolysis of 5,10-methenyltetrahydrofolate to 10-formyltetrahydrofolate.</text>
</comment>
<comment type="catalytic activity">
    <reaction evidence="1">
        <text>(6R)-5,10-methylene-5,6,7,8-tetrahydrofolate + NADP(+) = (6R)-5,10-methenyltetrahydrofolate + NADPH</text>
        <dbReference type="Rhea" id="RHEA:22812"/>
        <dbReference type="ChEBI" id="CHEBI:15636"/>
        <dbReference type="ChEBI" id="CHEBI:57455"/>
        <dbReference type="ChEBI" id="CHEBI:57783"/>
        <dbReference type="ChEBI" id="CHEBI:58349"/>
        <dbReference type="EC" id="1.5.1.5"/>
    </reaction>
</comment>
<comment type="catalytic activity">
    <reaction evidence="1">
        <text>(6R)-5,10-methenyltetrahydrofolate + H2O = (6R)-10-formyltetrahydrofolate + H(+)</text>
        <dbReference type="Rhea" id="RHEA:23700"/>
        <dbReference type="ChEBI" id="CHEBI:15377"/>
        <dbReference type="ChEBI" id="CHEBI:15378"/>
        <dbReference type="ChEBI" id="CHEBI:57455"/>
        <dbReference type="ChEBI" id="CHEBI:195366"/>
        <dbReference type="EC" id="3.5.4.9"/>
    </reaction>
</comment>
<comment type="pathway">
    <text evidence="1">One-carbon metabolism; tetrahydrofolate interconversion.</text>
</comment>
<comment type="subunit">
    <text evidence="1">Homodimer.</text>
</comment>
<comment type="similarity">
    <text evidence="1">Belongs to the tetrahydrofolate dehydrogenase/cyclohydrolase family.</text>
</comment>